<keyword id="KW-1185">Reference proteome</keyword>
<keyword id="KW-0687">Ribonucleoprotein</keyword>
<keyword id="KW-0689">Ribosomal protein</keyword>
<proteinExistence type="inferred from homology"/>
<name>RL32_SULDN</name>
<gene>
    <name evidence="1" type="primary">rpmF</name>
    <name type="ordered locus">Suden_1773</name>
</gene>
<protein>
    <recommendedName>
        <fullName evidence="1">Large ribosomal subunit protein bL32</fullName>
    </recommendedName>
    <alternativeName>
        <fullName evidence="3">50S ribosomal protein L32</fullName>
    </alternativeName>
</protein>
<sequence length="49" mass="5700">MAVPKRRVSHSRSAKRRTHYKITLAKPVKDKDGTYKLPHHINPTTGEYK</sequence>
<dbReference type="EMBL" id="CP000153">
    <property type="protein sequence ID" value="ABB45047.1"/>
    <property type="molecule type" value="Genomic_DNA"/>
</dbReference>
<dbReference type="RefSeq" id="WP_008335740.1">
    <property type="nucleotide sequence ID" value="NC_007575.1"/>
</dbReference>
<dbReference type="SMR" id="Q30PN4"/>
<dbReference type="STRING" id="326298.Suden_1773"/>
<dbReference type="KEGG" id="tdn:Suden_1773"/>
<dbReference type="eggNOG" id="COG0333">
    <property type="taxonomic scope" value="Bacteria"/>
</dbReference>
<dbReference type="HOGENOM" id="CLU_129084_1_2_7"/>
<dbReference type="OrthoDB" id="9801927at2"/>
<dbReference type="Proteomes" id="UP000002714">
    <property type="component" value="Chromosome"/>
</dbReference>
<dbReference type="GO" id="GO:0015934">
    <property type="term" value="C:large ribosomal subunit"/>
    <property type="evidence" value="ECO:0007669"/>
    <property type="project" value="InterPro"/>
</dbReference>
<dbReference type="GO" id="GO:0003735">
    <property type="term" value="F:structural constituent of ribosome"/>
    <property type="evidence" value="ECO:0007669"/>
    <property type="project" value="InterPro"/>
</dbReference>
<dbReference type="GO" id="GO:0006412">
    <property type="term" value="P:translation"/>
    <property type="evidence" value="ECO:0007669"/>
    <property type="project" value="UniProtKB-UniRule"/>
</dbReference>
<dbReference type="HAMAP" id="MF_00340">
    <property type="entry name" value="Ribosomal_bL32"/>
    <property type="match status" value="1"/>
</dbReference>
<dbReference type="InterPro" id="IPR002677">
    <property type="entry name" value="Ribosomal_bL32"/>
</dbReference>
<dbReference type="InterPro" id="IPR044957">
    <property type="entry name" value="Ribosomal_bL32_bact"/>
</dbReference>
<dbReference type="InterPro" id="IPR011332">
    <property type="entry name" value="Ribosomal_zn-bd"/>
</dbReference>
<dbReference type="NCBIfam" id="TIGR01031">
    <property type="entry name" value="rpmF_bact"/>
    <property type="match status" value="1"/>
</dbReference>
<dbReference type="PANTHER" id="PTHR35534">
    <property type="entry name" value="50S RIBOSOMAL PROTEIN L32"/>
    <property type="match status" value="1"/>
</dbReference>
<dbReference type="PANTHER" id="PTHR35534:SF1">
    <property type="entry name" value="LARGE RIBOSOMAL SUBUNIT PROTEIN BL32"/>
    <property type="match status" value="1"/>
</dbReference>
<dbReference type="Pfam" id="PF01783">
    <property type="entry name" value="Ribosomal_L32p"/>
    <property type="match status" value="1"/>
</dbReference>
<dbReference type="SUPFAM" id="SSF57829">
    <property type="entry name" value="Zn-binding ribosomal proteins"/>
    <property type="match status" value="1"/>
</dbReference>
<evidence type="ECO:0000255" key="1">
    <source>
        <dbReference type="HAMAP-Rule" id="MF_00340"/>
    </source>
</evidence>
<evidence type="ECO:0000256" key="2">
    <source>
        <dbReference type="SAM" id="MobiDB-lite"/>
    </source>
</evidence>
<evidence type="ECO:0000305" key="3"/>
<feature type="chain" id="PRO_0000296593" description="Large ribosomal subunit protein bL32">
    <location>
        <begin position="1"/>
        <end position="49"/>
    </location>
</feature>
<feature type="region of interest" description="Disordered" evidence="2">
    <location>
        <begin position="25"/>
        <end position="49"/>
    </location>
</feature>
<reference key="1">
    <citation type="journal article" date="2008" name="Appl. Environ. Microbiol.">
        <title>Genome of the epsilonproteobacterial chemolithoautotroph Sulfurimonas denitrificans.</title>
        <authorList>
            <person name="Sievert S.M."/>
            <person name="Scott K.M."/>
            <person name="Klotz M.G."/>
            <person name="Chain P.S.G."/>
            <person name="Hauser L.J."/>
            <person name="Hemp J."/>
            <person name="Huegler M."/>
            <person name="Land M."/>
            <person name="Lapidus A."/>
            <person name="Larimer F.W."/>
            <person name="Lucas S."/>
            <person name="Malfatti S.A."/>
            <person name="Meyer F."/>
            <person name="Paulsen I.T."/>
            <person name="Ren Q."/>
            <person name="Simon J."/>
            <person name="Bailey K."/>
            <person name="Diaz E."/>
            <person name="Fitzpatrick K.A."/>
            <person name="Glover B."/>
            <person name="Gwatney N."/>
            <person name="Korajkic A."/>
            <person name="Long A."/>
            <person name="Mobberley J.M."/>
            <person name="Pantry S.N."/>
            <person name="Pazder G."/>
            <person name="Peterson S."/>
            <person name="Quintanilla J.D."/>
            <person name="Sprinkle R."/>
            <person name="Stephens J."/>
            <person name="Thomas P."/>
            <person name="Vaughn R."/>
            <person name="Weber M.J."/>
            <person name="Wooten L.L."/>
        </authorList>
    </citation>
    <scope>NUCLEOTIDE SEQUENCE [LARGE SCALE GENOMIC DNA]</scope>
    <source>
        <strain>ATCC 33889 / DSM 1251</strain>
    </source>
</reference>
<comment type="similarity">
    <text evidence="1">Belongs to the bacterial ribosomal protein bL32 family.</text>
</comment>
<accession>Q30PN4</accession>
<organism>
    <name type="scientific">Sulfurimonas denitrificans (strain ATCC 33889 / DSM 1251)</name>
    <name type="common">Thiomicrospira denitrificans (strain ATCC 33889 / DSM 1251)</name>
    <dbReference type="NCBI Taxonomy" id="326298"/>
    <lineage>
        <taxon>Bacteria</taxon>
        <taxon>Pseudomonadati</taxon>
        <taxon>Campylobacterota</taxon>
        <taxon>Epsilonproteobacteria</taxon>
        <taxon>Campylobacterales</taxon>
        <taxon>Sulfurimonadaceae</taxon>
        <taxon>Sulfurimonas</taxon>
    </lineage>
</organism>